<accession>B5Z8Q8</accession>
<comment type="function">
    <text evidence="1">NDH-1 shuttles electrons from NADH, via FMN and iron-sulfur (Fe-S) centers, to quinones in the respiratory chain. The immediate electron acceptor for the enzyme in this species is believed to be ubiquinone. Couples the redox reaction to proton translocation (for every two electrons transferred, four hydrogen ions are translocated across the cytoplasmic membrane), and thus conserves the redox energy in a proton gradient.</text>
</comment>
<comment type="catalytic activity">
    <reaction evidence="1">
        <text>a quinone + NADH + 5 H(+)(in) = a quinol + NAD(+) + 4 H(+)(out)</text>
        <dbReference type="Rhea" id="RHEA:57888"/>
        <dbReference type="ChEBI" id="CHEBI:15378"/>
        <dbReference type="ChEBI" id="CHEBI:24646"/>
        <dbReference type="ChEBI" id="CHEBI:57540"/>
        <dbReference type="ChEBI" id="CHEBI:57945"/>
        <dbReference type="ChEBI" id="CHEBI:132124"/>
    </reaction>
</comment>
<comment type="subunit">
    <text evidence="1">NDH-1 is composed of 14 different subunits. Subunits NuoB, C, D, E, F, and G constitute the peripheral sector of the complex.</text>
</comment>
<comment type="subcellular location">
    <subcellularLocation>
        <location evidence="1">Cell inner membrane</location>
        <topology evidence="1">Peripheral membrane protein</topology>
        <orientation evidence="1">Cytoplasmic side</orientation>
    </subcellularLocation>
</comment>
<comment type="similarity">
    <text evidence="1">Belongs to the complex I 49 kDa subunit family.</text>
</comment>
<keyword id="KW-0997">Cell inner membrane</keyword>
<keyword id="KW-1003">Cell membrane</keyword>
<keyword id="KW-0472">Membrane</keyword>
<keyword id="KW-0520">NAD</keyword>
<keyword id="KW-0874">Quinone</keyword>
<keyword id="KW-1185">Reference proteome</keyword>
<keyword id="KW-1278">Translocase</keyword>
<keyword id="KW-0813">Transport</keyword>
<keyword id="KW-0830">Ubiquinone</keyword>
<feature type="chain" id="PRO_0000371878" description="NADH-quinone oxidoreductase subunit D">
    <location>
        <begin position="1"/>
        <end position="409"/>
    </location>
</feature>
<evidence type="ECO:0000255" key="1">
    <source>
        <dbReference type="HAMAP-Rule" id="MF_01358"/>
    </source>
</evidence>
<reference key="1">
    <citation type="journal article" date="2009" name="J. Bacteriol.">
        <title>The complete genome sequence of Helicobacter pylori strain G27.</title>
        <authorList>
            <person name="Baltrus D.A."/>
            <person name="Amieva M.R."/>
            <person name="Covacci A."/>
            <person name="Lowe T.M."/>
            <person name="Merrell D.S."/>
            <person name="Ottemann K.M."/>
            <person name="Stein M."/>
            <person name="Salama N.R."/>
            <person name="Guillemin K."/>
        </authorList>
    </citation>
    <scope>NUCLEOTIDE SEQUENCE [LARGE SCALE GENOMIC DNA]</scope>
    <source>
        <strain>G27</strain>
    </source>
</reference>
<proteinExistence type="inferred from homology"/>
<organism>
    <name type="scientific">Helicobacter pylori (strain G27)</name>
    <dbReference type="NCBI Taxonomy" id="563041"/>
    <lineage>
        <taxon>Bacteria</taxon>
        <taxon>Pseudomonadati</taxon>
        <taxon>Campylobacterota</taxon>
        <taxon>Epsilonproteobacteria</taxon>
        <taxon>Campylobacterales</taxon>
        <taxon>Helicobacteraceae</taxon>
        <taxon>Helicobacter</taxon>
    </lineage>
</organism>
<sequence>MAQNFTKLNPQFENIIFEHDDNQMILNFGPQHPSSHGQLRLILELEGEKIIKATPEIGYLHRGCEKLGENMTYNEYMPTTDRLDYTSSTSNNYAYAYAVETLLNLEIPRRAQVIRTILLELNRMISHIFFISVHALDVGAMSVFLYAFKTREYGLDLMEDYCGARLTHNAIRIGGVPLDLPPNWLEGLKKFLGEMRECKKLIQGLLDKNRIWRMRLENVGVVTPKMAQSWGMSGIMLRGTGIAYDIRKEEPYELYKELDFDVPVGNYGDSYDRYCLYMLEIDESIRIIEQLIPMYAKTDTPIMAQNPHYISAPKEDIMTQNYALMQHFVLVAQGMRPPIGEVYAPTESPKGELGFFIHSEGEPYPHRLKIRAPSFYHIGALSDILVGQYLADAVTVIGSTNAVFGEVDR</sequence>
<protein>
    <recommendedName>
        <fullName evidence="1">NADH-quinone oxidoreductase subunit D</fullName>
        <ecNumber evidence="1">7.1.1.-</ecNumber>
    </recommendedName>
    <alternativeName>
        <fullName evidence="1">NADH dehydrogenase I subunit D</fullName>
    </alternativeName>
    <alternativeName>
        <fullName evidence="1">NDH-1 subunit D</fullName>
    </alternativeName>
</protein>
<name>NUOD_HELPG</name>
<gene>
    <name evidence="1" type="primary">nuoD</name>
    <name type="ordered locus">HPG27_1208</name>
</gene>
<dbReference type="EC" id="7.1.1.-" evidence="1"/>
<dbReference type="EMBL" id="CP001173">
    <property type="protein sequence ID" value="ACI27957.1"/>
    <property type="molecule type" value="Genomic_DNA"/>
</dbReference>
<dbReference type="RefSeq" id="WP_000068228.1">
    <property type="nucleotide sequence ID" value="NC_011333.1"/>
</dbReference>
<dbReference type="SMR" id="B5Z8Q8"/>
<dbReference type="KEGG" id="hpg:HPG27_1208"/>
<dbReference type="HOGENOM" id="CLU_015134_1_2_7"/>
<dbReference type="Proteomes" id="UP000001735">
    <property type="component" value="Chromosome"/>
</dbReference>
<dbReference type="GO" id="GO:0005886">
    <property type="term" value="C:plasma membrane"/>
    <property type="evidence" value="ECO:0007669"/>
    <property type="project" value="UniProtKB-SubCell"/>
</dbReference>
<dbReference type="GO" id="GO:0051287">
    <property type="term" value="F:NAD binding"/>
    <property type="evidence" value="ECO:0007669"/>
    <property type="project" value="InterPro"/>
</dbReference>
<dbReference type="GO" id="GO:0050136">
    <property type="term" value="F:NADH:ubiquinone reductase (non-electrogenic) activity"/>
    <property type="evidence" value="ECO:0007669"/>
    <property type="project" value="UniProtKB-UniRule"/>
</dbReference>
<dbReference type="GO" id="GO:0048038">
    <property type="term" value="F:quinone binding"/>
    <property type="evidence" value="ECO:0007669"/>
    <property type="project" value="UniProtKB-KW"/>
</dbReference>
<dbReference type="Gene3D" id="1.10.645.10">
    <property type="entry name" value="Cytochrome-c3 Hydrogenase, chain B"/>
    <property type="match status" value="1"/>
</dbReference>
<dbReference type="HAMAP" id="MF_01358">
    <property type="entry name" value="NDH1_NuoD"/>
    <property type="match status" value="1"/>
</dbReference>
<dbReference type="InterPro" id="IPR001135">
    <property type="entry name" value="NADH_Q_OxRdtase_suD"/>
</dbReference>
<dbReference type="InterPro" id="IPR022885">
    <property type="entry name" value="NDH1_su_D/H"/>
</dbReference>
<dbReference type="InterPro" id="IPR029014">
    <property type="entry name" value="NiFe-Hase_large"/>
</dbReference>
<dbReference type="NCBIfam" id="TIGR01962">
    <property type="entry name" value="NuoD"/>
    <property type="match status" value="1"/>
</dbReference>
<dbReference type="NCBIfam" id="NF004739">
    <property type="entry name" value="PRK06075.1"/>
    <property type="match status" value="1"/>
</dbReference>
<dbReference type="PANTHER" id="PTHR11993:SF10">
    <property type="entry name" value="NADH DEHYDROGENASE [UBIQUINONE] IRON-SULFUR PROTEIN 2, MITOCHONDRIAL"/>
    <property type="match status" value="1"/>
</dbReference>
<dbReference type="PANTHER" id="PTHR11993">
    <property type="entry name" value="NADH-UBIQUINONE OXIDOREDUCTASE 49 KDA SUBUNIT"/>
    <property type="match status" value="1"/>
</dbReference>
<dbReference type="Pfam" id="PF00346">
    <property type="entry name" value="Complex1_49kDa"/>
    <property type="match status" value="1"/>
</dbReference>
<dbReference type="SUPFAM" id="SSF56762">
    <property type="entry name" value="HydB/Nqo4-like"/>
    <property type="match status" value="1"/>
</dbReference>